<organism>
    <name type="scientific">Halalkalibacterium halodurans (strain ATCC BAA-125 / DSM 18197 / FERM 7344 / JCM 9153 / C-125)</name>
    <name type="common">Bacillus halodurans</name>
    <dbReference type="NCBI Taxonomy" id="272558"/>
    <lineage>
        <taxon>Bacteria</taxon>
        <taxon>Bacillati</taxon>
        <taxon>Bacillota</taxon>
        <taxon>Bacilli</taxon>
        <taxon>Bacillales</taxon>
        <taxon>Bacillaceae</taxon>
        <taxon>Halalkalibacterium (ex Joshi et al. 2022)</taxon>
    </lineage>
</organism>
<sequence>MKPIRIGIGGPVGSGKTHLVEQLTRAMHESYELAVITNDIYTKEDAQFLVKHGILPEDRIIGVETGGCPHTAIREDASMNFEAIHELKQRFTNLDIIFVESGGDNLSATFSPELVDGFIYVIDVAEGQDIPRKGGPGVTRSDLLVINKIDLAPYVEVDLDIMEEDAKQARGERPFVFTDQKRGKGIETIIDWIKRELLLEDMVKEPSV</sequence>
<dbReference type="EMBL" id="BA000004">
    <property type="protein sequence ID" value="BAB03976.1"/>
    <property type="molecule type" value="Genomic_DNA"/>
</dbReference>
<dbReference type="PIR" id="A83682">
    <property type="entry name" value="A83682"/>
</dbReference>
<dbReference type="RefSeq" id="WP_010896439.1">
    <property type="nucleotide sequence ID" value="NC_002570.2"/>
</dbReference>
<dbReference type="SMR" id="Q9KG56"/>
<dbReference type="STRING" id="272558.gene:10726102"/>
<dbReference type="KEGG" id="bha:BH0257"/>
<dbReference type="eggNOG" id="COG0378">
    <property type="taxonomic scope" value="Bacteria"/>
</dbReference>
<dbReference type="HOGENOM" id="CLU_072144_1_0_9"/>
<dbReference type="OrthoDB" id="9802035at2"/>
<dbReference type="Proteomes" id="UP000001258">
    <property type="component" value="Chromosome"/>
</dbReference>
<dbReference type="GO" id="GO:0005737">
    <property type="term" value="C:cytoplasm"/>
    <property type="evidence" value="ECO:0007669"/>
    <property type="project" value="UniProtKB-SubCell"/>
</dbReference>
<dbReference type="GO" id="GO:0005525">
    <property type="term" value="F:GTP binding"/>
    <property type="evidence" value="ECO:0007669"/>
    <property type="project" value="UniProtKB-KW"/>
</dbReference>
<dbReference type="GO" id="GO:0003924">
    <property type="term" value="F:GTPase activity"/>
    <property type="evidence" value="ECO:0007669"/>
    <property type="project" value="InterPro"/>
</dbReference>
<dbReference type="GO" id="GO:0016151">
    <property type="term" value="F:nickel cation binding"/>
    <property type="evidence" value="ECO:0007669"/>
    <property type="project" value="UniProtKB-UniRule"/>
</dbReference>
<dbReference type="GO" id="GO:0043419">
    <property type="term" value="P:urea catabolic process"/>
    <property type="evidence" value="ECO:0007669"/>
    <property type="project" value="InterPro"/>
</dbReference>
<dbReference type="CDD" id="cd05540">
    <property type="entry name" value="UreG"/>
    <property type="match status" value="1"/>
</dbReference>
<dbReference type="FunFam" id="3.40.50.300:FF:000208">
    <property type="entry name" value="Urease accessory protein UreG"/>
    <property type="match status" value="1"/>
</dbReference>
<dbReference type="Gene3D" id="3.40.50.300">
    <property type="entry name" value="P-loop containing nucleotide triphosphate hydrolases"/>
    <property type="match status" value="1"/>
</dbReference>
<dbReference type="HAMAP" id="MF_01389">
    <property type="entry name" value="UreG"/>
    <property type="match status" value="1"/>
</dbReference>
<dbReference type="InterPro" id="IPR003495">
    <property type="entry name" value="CobW/HypB/UreG_nucleotide-bd"/>
</dbReference>
<dbReference type="InterPro" id="IPR027417">
    <property type="entry name" value="P-loop_NTPase"/>
</dbReference>
<dbReference type="InterPro" id="IPR004400">
    <property type="entry name" value="UreG"/>
</dbReference>
<dbReference type="NCBIfam" id="TIGR00101">
    <property type="entry name" value="ureG"/>
    <property type="match status" value="1"/>
</dbReference>
<dbReference type="PANTHER" id="PTHR31715">
    <property type="entry name" value="UREASE ACCESSORY PROTEIN G"/>
    <property type="match status" value="1"/>
</dbReference>
<dbReference type="PANTHER" id="PTHR31715:SF0">
    <property type="entry name" value="UREASE ACCESSORY PROTEIN G"/>
    <property type="match status" value="1"/>
</dbReference>
<dbReference type="Pfam" id="PF02492">
    <property type="entry name" value="cobW"/>
    <property type="match status" value="1"/>
</dbReference>
<dbReference type="PIRSF" id="PIRSF005624">
    <property type="entry name" value="Ni-bind_GTPase"/>
    <property type="match status" value="1"/>
</dbReference>
<dbReference type="SUPFAM" id="SSF52540">
    <property type="entry name" value="P-loop containing nucleoside triphosphate hydrolases"/>
    <property type="match status" value="1"/>
</dbReference>
<reference key="1">
    <citation type="journal article" date="2000" name="Nucleic Acids Res.">
        <title>Complete genome sequence of the alkaliphilic bacterium Bacillus halodurans and genomic sequence comparison with Bacillus subtilis.</title>
        <authorList>
            <person name="Takami H."/>
            <person name="Nakasone K."/>
            <person name="Takaki Y."/>
            <person name="Maeno G."/>
            <person name="Sasaki R."/>
            <person name="Masui N."/>
            <person name="Fuji F."/>
            <person name="Hirama C."/>
            <person name="Nakamura Y."/>
            <person name="Ogasawara N."/>
            <person name="Kuhara S."/>
            <person name="Horikoshi K."/>
        </authorList>
    </citation>
    <scope>NUCLEOTIDE SEQUENCE [LARGE SCALE GENOMIC DNA]</scope>
    <source>
        <strain>ATCC BAA-125 / DSM 18197 / FERM 7344 / JCM 9153 / C-125</strain>
    </source>
</reference>
<gene>
    <name evidence="1" type="primary">ureG</name>
    <name type="ordered locus">BH0257</name>
</gene>
<feature type="chain" id="PRO_1000145167" description="Urease accessory protein UreG">
    <location>
        <begin position="1"/>
        <end position="208"/>
    </location>
</feature>
<feature type="binding site" evidence="1">
    <location>
        <begin position="10"/>
        <end position="17"/>
    </location>
    <ligand>
        <name>GTP</name>
        <dbReference type="ChEBI" id="CHEBI:37565"/>
    </ligand>
</feature>
<protein>
    <recommendedName>
        <fullName evidence="1">Urease accessory protein UreG</fullName>
    </recommendedName>
</protein>
<name>UREG_HALH5</name>
<evidence type="ECO:0000255" key="1">
    <source>
        <dbReference type="HAMAP-Rule" id="MF_01389"/>
    </source>
</evidence>
<proteinExistence type="inferred from homology"/>
<keyword id="KW-0143">Chaperone</keyword>
<keyword id="KW-0963">Cytoplasm</keyword>
<keyword id="KW-0342">GTP-binding</keyword>
<keyword id="KW-0996">Nickel insertion</keyword>
<keyword id="KW-0547">Nucleotide-binding</keyword>
<keyword id="KW-1185">Reference proteome</keyword>
<accession>Q9KG56</accession>
<comment type="function">
    <text evidence="1">Facilitates the functional incorporation of the urease nickel metallocenter. This process requires GTP hydrolysis, probably effectuated by UreG.</text>
</comment>
<comment type="subunit">
    <text evidence="1">Homodimer. UreD, UreF and UreG form a complex that acts as a GTP-hydrolysis-dependent molecular chaperone, activating the urease apoprotein by helping to assemble the nickel containing metallocenter of UreC. The UreE protein probably delivers the nickel.</text>
</comment>
<comment type="subcellular location">
    <subcellularLocation>
        <location evidence="1">Cytoplasm</location>
    </subcellularLocation>
</comment>
<comment type="similarity">
    <text evidence="1">Belongs to the SIMIBI class G3E GTPase family. UreG subfamily.</text>
</comment>